<keyword id="KW-0963">Cytoplasm</keyword>
<keyword id="KW-0479">Metal-binding</keyword>
<keyword id="KW-0862">Zinc</keyword>
<dbReference type="EMBL" id="CU928160">
    <property type="protein sequence ID" value="CAQ99892.1"/>
    <property type="molecule type" value="Genomic_DNA"/>
</dbReference>
<dbReference type="RefSeq" id="WP_001495390.1">
    <property type="nucleotide sequence ID" value="NC_011741.1"/>
</dbReference>
<dbReference type="KEGG" id="ecr:ECIAI1_3077"/>
<dbReference type="HOGENOM" id="CLU_113336_0_1_6"/>
<dbReference type="GO" id="GO:0005737">
    <property type="term" value="C:cytoplasm"/>
    <property type="evidence" value="ECO:0007669"/>
    <property type="project" value="UniProtKB-SubCell"/>
</dbReference>
<dbReference type="GO" id="GO:0008270">
    <property type="term" value="F:zinc ion binding"/>
    <property type="evidence" value="ECO:0007669"/>
    <property type="project" value="UniProtKB-UniRule"/>
</dbReference>
<dbReference type="GO" id="GO:0006950">
    <property type="term" value="P:response to stress"/>
    <property type="evidence" value="ECO:0007669"/>
    <property type="project" value="UniProtKB-ARBA"/>
</dbReference>
<dbReference type="Gene3D" id="3.30.2010.10">
    <property type="entry name" value="Metalloproteases ('zincins'), catalytic domain"/>
    <property type="match status" value="1"/>
</dbReference>
<dbReference type="HAMAP" id="MF_00746">
    <property type="entry name" value="SprT"/>
    <property type="match status" value="1"/>
</dbReference>
<dbReference type="InterPro" id="IPR006640">
    <property type="entry name" value="SprT-like_domain"/>
</dbReference>
<dbReference type="InterPro" id="IPR035240">
    <property type="entry name" value="SprT_Zn_ribbon"/>
</dbReference>
<dbReference type="InterPro" id="IPR023483">
    <property type="entry name" value="Uncharacterised_SprT"/>
</dbReference>
<dbReference type="NCBIfam" id="NF003421">
    <property type="entry name" value="PRK04860.1"/>
    <property type="match status" value="1"/>
</dbReference>
<dbReference type="PANTHER" id="PTHR38773">
    <property type="entry name" value="PROTEIN SPRT"/>
    <property type="match status" value="1"/>
</dbReference>
<dbReference type="PANTHER" id="PTHR38773:SF1">
    <property type="entry name" value="PROTEIN SPRT"/>
    <property type="match status" value="1"/>
</dbReference>
<dbReference type="Pfam" id="PF10263">
    <property type="entry name" value="SprT-like"/>
    <property type="match status" value="1"/>
</dbReference>
<dbReference type="Pfam" id="PF17283">
    <property type="entry name" value="Zn_ribbon_SprT"/>
    <property type="match status" value="1"/>
</dbReference>
<dbReference type="SMART" id="SM00731">
    <property type="entry name" value="SprT"/>
    <property type="match status" value="1"/>
</dbReference>
<dbReference type="PROSITE" id="PS00142">
    <property type="entry name" value="ZINC_PROTEASE"/>
    <property type="match status" value="1"/>
</dbReference>
<accession>B7LYX4</accession>
<reference key="1">
    <citation type="journal article" date="2009" name="PLoS Genet.">
        <title>Organised genome dynamics in the Escherichia coli species results in highly diverse adaptive paths.</title>
        <authorList>
            <person name="Touchon M."/>
            <person name="Hoede C."/>
            <person name="Tenaillon O."/>
            <person name="Barbe V."/>
            <person name="Baeriswyl S."/>
            <person name="Bidet P."/>
            <person name="Bingen E."/>
            <person name="Bonacorsi S."/>
            <person name="Bouchier C."/>
            <person name="Bouvet O."/>
            <person name="Calteau A."/>
            <person name="Chiapello H."/>
            <person name="Clermont O."/>
            <person name="Cruveiller S."/>
            <person name="Danchin A."/>
            <person name="Diard M."/>
            <person name="Dossat C."/>
            <person name="Karoui M.E."/>
            <person name="Frapy E."/>
            <person name="Garry L."/>
            <person name="Ghigo J.M."/>
            <person name="Gilles A.M."/>
            <person name="Johnson J."/>
            <person name="Le Bouguenec C."/>
            <person name="Lescat M."/>
            <person name="Mangenot S."/>
            <person name="Martinez-Jehanne V."/>
            <person name="Matic I."/>
            <person name="Nassif X."/>
            <person name="Oztas S."/>
            <person name="Petit M.A."/>
            <person name="Pichon C."/>
            <person name="Rouy Z."/>
            <person name="Ruf C.S."/>
            <person name="Schneider D."/>
            <person name="Tourret J."/>
            <person name="Vacherie B."/>
            <person name="Vallenet D."/>
            <person name="Medigue C."/>
            <person name="Rocha E.P.C."/>
            <person name="Denamur E."/>
        </authorList>
    </citation>
    <scope>NUCLEOTIDE SEQUENCE [LARGE SCALE GENOMIC DNA]</scope>
    <source>
        <strain>IAI1</strain>
    </source>
</reference>
<feature type="chain" id="PRO_1000133237" description="Protein SprT">
    <location>
        <begin position="1"/>
        <end position="165"/>
    </location>
</feature>
<feature type="domain" description="SprT-like" evidence="1">
    <location>
        <begin position="20"/>
        <end position="163"/>
    </location>
</feature>
<feature type="active site" evidence="1">
    <location>
        <position position="79"/>
    </location>
</feature>
<feature type="binding site" evidence="1">
    <location>
        <position position="78"/>
    </location>
    <ligand>
        <name>Zn(2+)</name>
        <dbReference type="ChEBI" id="CHEBI:29105"/>
    </ligand>
</feature>
<feature type="binding site" evidence="1">
    <location>
        <position position="82"/>
    </location>
    <ligand>
        <name>Zn(2+)</name>
        <dbReference type="ChEBI" id="CHEBI:29105"/>
    </ligand>
</feature>
<evidence type="ECO:0000255" key="1">
    <source>
        <dbReference type="HAMAP-Rule" id="MF_00746"/>
    </source>
</evidence>
<protein>
    <recommendedName>
        <fullName evidence="1">Protein SprT</fullName>
    </recommendedName>
</protein>
<gene>
    <name evidence="1" type="primary">sprT</name>
    <name type="ordered locus">ECIAI1_3077</name>
</gene>
<proteinExistence type="inferred from homology"/>
<comment type="cofactor">
    <cofactor evidence="1">
        <name>Zn(2+)</name>
        <dbReference type="ChEBI" id="CHEBI:29105"/>
    </cofactor>
    <text evidence="1">Binds 1 zinc ion.</text>
</comment>
<comment type="subcellular location">
    <subcellularLocation>
        <location evidence="1">Cytoplasm</location>
    </subcellularLocation>
</comment>
<comment type="similarity">
    <text evidence="1">Belongs to the SprT family.</text>
</comment>
<name>SPRT_ECO8A</name>
<sequence length="165" mass="19351">MKTSRLPIAIQQAVMRRLREKLTQANLKLGRNYPEPKLSYTQRGTSAGTAWLESYEIRLNPVLLLENSEAFIEEVVPHELAHLLVWKHFGRVAPHGKEWKWMMESVLGVPARRTHQFELQSVRRNTFPYRCKCQEHQLTVRRHNRVVRGEAVYRCVHCGEQLVAK</sequence>
<organism>
    <name type="scientific">Escherichia coli O8 (strain IAI1)</name>
    <dbReference type="NCBI Taxonomy" id="585034"/>
    <lineage>
        <taxon>Bacteria</taxon>
        <taxon>Pseudomonadati</taxon>
        <taxon>Pseudomonadota</taxon>
        <taxon>Gammaproteobacteria</taxon>
        <taxon>Enterobacterales</taxon>
        <taxon>Enterobacteriaceae</taxon>
        <taxon>Escherichia</taxon>
    </lineage>
</organism>